<proteinExistence type="inferred from homology"/>
<comment type="function">
    <text evidence="1">ATP-dependent specificity component of the Clp protease. It directs the protease to specific substrates. Can perform chaperone functions in the absence of ClpP.</text>
</comment>
<comment type="subunit">
    <text evidence="1">Component of the ClpX-ClpP complex. Forms a hexameric ring that, in the presence of ATP, binds to fourteen ClpP subunits assembled into a disk-like structure with a central cavity, resembling the structure of eukaryotic proteasomes.</text>
</comment>
<comment type="similarity">
    <text evidence="1">Belongs to the ClpX chaperone family.</text>
</comment>
<name>CLPX_BLOFL</name>
<feature type="chain" id="PRO_0000160334" description="ATP-dependent Clp protease ATP-binding subunit ClpX">
    <location>
        <begin position="1"/>
        <end position="426"/>
    </location>
</feature>
<feature type="domain" description="ClpX-type ZB" evidence="2">
    <location>
        <begin position="3"/>
        <end position="56"/>
    </location>
</feature>
<feature type="binding site" evidence="2">
    <location>
        <position position="15"/>
    </location>
    <ligand>
        <name>Zn(2+)</name>
        <dbReference type="ChEBI" id="CHEBI:29105"/>
    </ligand>
</feature>
<feature type="binding site" evidence="2">
    <location>
        <position position="18"/>
    </location>
    <ligand>
        <name>Zn(2+)</name>
        <dbReference type="ChEBI" id="CHEBI:29105"/>
    </ligand>
</feature>
<feature type="binding site" evidence="2">
    <location>
        <position position="37"/>
    </location>
    <ligand>
        <name>Zn(2+)</name>
        <dbReference type="ChEBI" id="CHEBI:29105"/>
    </ligand>
</feature>
<feature type="binding site" evidence="2">
    <location>
        <position position="40"/>
    </location>
    <ligand>
        <name>Zn(2+)</name>
        <dbReference type="ChEBI" id="CHEBI:29105"/>
    </ligand>
</feature>
<feature type="binding site" evidence="1">
    <location>
        <begin position="130"/>
        <end position="137"/>
    </location>
    <ligand>
        <name>ATP</name>
        <dbReference type="ChEBI" id="CHEBI:30616"/>
    </ligand>
</feature>
<accession>Q7VRH0</accession>
<dbReference type="EMBL" id="BX248583">
    <property type="protein sequence ID" value="CAD83318.1"/>
    <property type="molecule type" value="Genomic_DNA"/>
</dbReference>
<dbReference type="SMR" id="Q7VRH0"/>
<dbReference type="STRING" id="203907.Bfl247"/>
<dbReference type="KEGG" id="bfl:Bfl247"/>
<dbReference type="eggNOG" id="COG1219">
    <property type="taxonomic scope" value="Bacteria"/>
</dbReference>
<dbReference type="HOGENOM" id="CLU_014218_8_2_6"/>
<dbReference type="OrthoDB" id="9804062at2"/>
<dbReference type="Proteomes" id="UP000002192">
    <property type="component" value="Chromosome"/>
</dbReference>
<dbReference type="GO" id="GO:0009376">
    <property type="term" value="C:HslUV protease complex"/>
    <property type="evidence" value="ECO:0007669"/>
    <property type="project" value="TreeGrafter"/>
</dbReference>
<dbReference type="GO" id="GO:0005524">
    <property type="term" value="F:ATP binding"/>
    <property type="evidence" value="ECO:0007669"/>
    <property type="project" value="UniProtKB-UniRule"/>
</dbReference>
<dbReference type="GO" id="GO:0016887">
    <property type="term" value="F:ATP hydrolysis activity"/>
    <property type="evidence" value="ECO:0007669"/>
    <property type="project" value="InterPro"/>
</dbReference>
<dbReference type="GO" id="GO:0140662">
    <property type="term" value="F:ATP-dependent protein folding chaperone"/>
    <property type="evidence" value="ECO:0007669"/>
    <property type="project" value="InterPro"/>
</dbReference>
<dbReference type="GO" id="GO:0046983">
    <property type="term" value="F:protein dimerization activity"/>
    <property type="evidence" value="ECO:0007669"/>
    <property type="project" value="InterPro"/>
</dbReference>
<dbReference type="GO" id="GO:0051082">
    <property type="term" value="F:unfolded protein binding"/>
    <property type="evidence" value="ECO:0007669"/>
    <property type="project" value="UniProtKB-UniRule"/>
</dbReference>
<dbReference type="GO" id="GO:0008270">
    <property type="term" value="F:zinc ion binding"/>
    <property type="evidence" value="ECO:0007669"/>
    <property type="project" value="InterPro"/>
</dbReference>
<dbReference type="GO" id="GO:0051301">
    <property type="term" value="P:cell division"/>
    <property type="evidence" value="ECO:0007669"/>
    <property type="project" value="TreeGrafter"/>
</dbReference>
<dbReference type="GO" id="GO:0051603">
    <property type="term" value="P:proteolysis involved in protein catabolic process"/>
    <property type="evidence" value="ECO:0007669"/>
    <property type="project" value="TreeGrafter"/>
</dbReference>
<dbReference type="CDD" id="cd19497">
    <property type="entry name" value="RecA-like_ClpX"/>
    <property type="match status" value="1"/>
</dbReference>
<dbReference type="FunFam" id="1.10.8.60:FF:000002">
    <property type="entry name" value="ATP-dependent Clp protease ATP-binding subunit ClpX"/>
    <property type="match status" value="1"/>
</dbReference>
<dbReference type="FunFam" id="3.40.50.300:FF:000005">
    <property type="entry name" value="ATP-dependent Clp protease ATP-binding subunit ClpX"/>
    <property type="match status" value="1"/>
</dbReference>
<dbReference type="Gene3D" id="1.10.8.60">
    <property type="match status" value="1"/>
</dbReference>
<dbReference type="Gene3D" id="6.20.220.10">
    <property type="entry name" value="ClpX chaperone, C4-type zinc finger domain"/>
    <property type="match status" value="1"/>
</dbReference>
<dbReference type="Gene3D" id="3.40.50.300">
    <property type="entry name" value="P-loop containing nucleotide triphosphate hydrolases"/>
    <property type="match status" value="1"/>
</dbReference>
<dbReference type="HAMAP" id="MF_00175">
    <property type="entry name" value="ClpX"/>
    <property type="match status" value="1"/>
</dbReference>
<dbReference type="InterPro" id="IPR003593">
    <property type="entry name" value="AAA+_ATPase"/>
</dbReference>
<dbReference type="InterPro" id="IPR050052">
    <property type="entry name" value="ATP-dep_Clp_protease_ClpX"/>
</dbReference>
<dbReference type="InterPro" id="IPR003959">
    <property type="entry name" value="ATPase_AAA_core"/>
</dbReference>
<dbReference type="InterPro" id="IPR019489">
    <property type="entry name" value="Clp_ATPase_C"/>
</dbReference>
<dbReference type="InterPro" id="IPR004487">
    <property type="entry name" value="Clp_protease_ATP-bd_su_ClpX"/>
</dbReference>
<dbReference type="InterPro" id="IPR046425">
    <property type="entry name" value="ClpX_bact"/>
</dbReference>
<dbReference type="InterPro" id="IPR027417">
    <property type="entry name" value="P-loop_NTPase"/>
</dbReference>
<dbReference type="InterPro" id="IPR010603">
    <property type="entry name" value="Znf_CppX_C4"/>
</dbReference>
<dbReference type="InterPro" id="IPR038366">
    <property type="entry name" value="Znf_CppX_C4_sf"/>
</dbReference>
<dbReference type="NCBIfam" id="TIGR00382">
    <property type="entry name" value="clpX"/>
    <property type="match status" value="1"/>
</dbReference>
<dbReference type="NCBIfam" id="NF003745">
    <property type="entry name" value="PRK05342.1"/>
    <property type="match status" value="1"/>
</dbReference>
<dbReference type="PANTHER" id="PTHR48102:SF7">
    <property type="entry name" value="ATP-DEPENDENT CLP PROTEASE ATP-BINDING SUBUNIT CLPX-LIKE, MITOCHONDRIAL"/>
    <property type="match status" value="1"/>
</dbReference>
<dbReference type="PANTHER" id="PTHR48102">
    <property type="entry name" value="ATP-DEPENDENT CLP PROTEASE ATP-BINDING SUBUNIT CLPX-LIKE, MITOCHONDRIAL-RELATED"/>
    <property type="match status" value="1"/>
</dbReference>
<dbReference type="Pfam" id="PF07724">
    <property type="entry name" value="AAA_2"/>
    <property type="match status" value="1"/>
</dbReference>
<dbReference type="Pfam" id="PF10431">
    <property type="entry name" value="ClpB_D2-small"/>
    <property type="match status" value="1"/>
</dbReference>
<dbReference type="Pfam" id="PF06689">
    <property type="entry name" value="zf-C4_ClpX"/>
    <property type="match status" value="1"/>
</dbReference>
<dbReference type="SMART" id="SM00382">
    <property type="entry name" value="AAA"/>
    <property type="match status" value="1"/>
</dbReference>
<dbReference type="SMART" id="SM01086">
    <property type="entry name" value="ClpB_D2-small"/>
    <property type="match status" value="1"/>
</dbReference>
<dbReference type="SMART" id="SM00994">
    <property type="entry name" value="zf-C4_ClpX"/>
    <property type="match status" value="1"/>
</dbReference>
<dbReference type="SUPFAM" id="SSF57716">
    <property type="entry name" value="Glucocorticoid receptor-like (DNA-binding domain)"/>
    <property type="match status" value="1"/>
</dbReference>
<dbReference type="SUPFAM" id="SSF52540">
    <property type="entry name" value="P-loop containing nucleoside triphosphate hydrolases"/>
    <property type="match status" value="1"/>
</dbReference>
<dbReference type="PROSITE" id="PS51902">
    <property type="entry name" value="CLPX_ZB"/>
    <property type="match status" value="1"/>
</dbReference>
<organism>
    <name type="scientific">Blochmanniella floridana</name>
    <dbReference type="NCBI Taxonomy" id="203907"/>
    <lineage>
        <taxon>Bacteria</taxon>
        <taxon>Pseudomonadati</taxon>
        <taxon>Pseudomonadota</taxon>
        <taxon>Gammaproteobacteria</taxon>
        <taxon>Enterobacterales</taxon>
        <taxon>Enterobacteriaceae</taxon>
        <taxon>ant endosymbionts</taxon>
        <taxon>Candidatus Blochmanniella</taxon>
    </lineage>
</organism>
<protein>
    <recommendedName>
        <fullName evidence="1">ATP-dependent Clp protease ATP-binding subunit ClpX</fullName>
    </recommendedName>
</protein>
<sequence length="426" mass="47994">MNNNYQGFTEESLCCSFCGKNHLQVLKLITGKSARICNICIHLFNNIVTNIFQEKKIVNYKELEKFPTPHDINQYLSTYVVGQEYVKKTLAVAVYNHYKRLRYQVMNINNNSNLYQDVELSKSNILLIGPTGSGKTLLAQTLARFLDIPFSISDATTLTEAGYVGEDVENVIQKLLQRCDYNIDRAQSGIIYIDEIDKIAKKSENISITRDVSGEGVQQALLKLIEGTVAFIPPKGGRKHPQQEFIQVDTTNILFICGGSFSGLNKIVEERISDNHAIGFHASLKDNNRENLKYSLLNKVEPEDLIKFGLIPEFVGRFPVISILNELKESELVAILKEPKNALIKQYQKLFYTDKVKLEFAESALSAIAKCAMATKSSGARGLRTILENILLDMMYDLPNQNKVTKVVINSDVVFGKSKPLLFYDN</sequence>
<keyword id="KW-0067">ATP-binding</keyword>
<keyword id="KW-0143">Chaperone</keyword>
<keyword id="KW-0479">Metal-binding</keyword>
<keyword id="KW-0547">Nucleotide-binding</keyword>
<keyword id="KW-1185">Reference proteome</keyword>
<keyword id="KW-0862">Zinc</keyword>
<evidence type="ECO:0000255" key="1">
    <source>
        <dbReference type="HAMAP-Rule" id="MF_00175"/>
    </source>
</evidence>
<evidence type="ECO:0000255" key="2">
    <source>
        <dbReference type="PROSITE-ProRule" id="PRU01250"/>
    </source>
</evidence>
<reference key="1">
    <citation type="journal article" date="2003" name="Proc. Natl. Acad. Sci. U.S.A.">
        <title>The genome sequence of Blochmannia floridanus: comparative analysis of reduced genomes.</title>
        <authorList>
            <person name="Gil R."/>
            <person name="Silva F.J."/>
            <person name="Zientz E."/>
            <person name="Delmotte F."/>
            <person name="Gonzalez-Candelas F."/>
            <person name="Latorre A."/>
            <person name="Rausell C."/>
            <person name="Kamerbeek J."/>
            <person name="Gadau J."/>
            <person name="Hoelldobler B."/>
            <person name="van Ham R.C.H.J."/>
            <person name="Gross R."/>
            <person name="Moya A."/>
        </authorList>
    </citation>
    <scope>NUCLEOTIDE SEQUENCE [LARGE SCALE GENOMIC DNA]</scope>
</reference>
<gene>
    <name evidence="1" type="primary">clpX</name>
    <name type="ordered locus">Bfl247</name>
</gene>